<proteinExistence type="inferred from homology"/>
<organism>
    <name type="scientific">Schizosaccharomyces pombe (strain 972 / ATCC 24843)</name>
    <name type="common">Fission yeast</name>
    <dbReference type="NCBI Taxonomy" id="284812"/>
    <lineage>
        <taxon>Eukaryota</taxon>
        <taxon>Fungi</taxon>
        <taxon>Dikarya</taxon>
        <taxon>Ascomycota</taxon>
        <taxon>Taphrinomycotina</taxon>
        <taxon>Schizosaccharomycetes</taxon>
        <taxon>Schizosaccharomycetales</taxon>
        <taxon>Schizosaccharomycetaceae</taxon>
        <taxon>Schizosaccharomyces</taxon>
    </lineage>
</organism>
<accession>Q09720</accession>
<keyword id="KW-0963">Cytoplasm</keyword>
<keyword id="KW-0539">Nucleus</keyword>
<keyword id="KW-0647">Proteasome</keyword>
<keyword id="KW-1185">Reference proteome</keyword>
<dbReference type="EMBL" id="CU329670">
    <property type="protein sequence ID" value="CAA90462.1"/>
    <property type="molecule type" value="Genomic_DNA"/>
</dbReference>
<dbReference type="PIR" id="S58101">
    <property type="entry name" value="S58101"/>
</dbReference>
<dbReference type="SMR" id="Q09720"/>
<dbReference type="BioGRID" id="279554">
    <property type="interactions" value="7"/>
</dbReference>
<dbReference type="ComplexPortal" id="CPX-9077">
    <property type="entry name" value="26S proteasome complex"/>
</dbReference>
<dbReference type="FunCoup" id="Q09720">
    <property type="interactions" value="607"/>
</dbReference>
<dbReference type="STRING" id="284812.Q09720"/>
<dbReference type="MEROPS" id="T01.984"/>
<dbReference type="iPTMnet" id="Q09720"/>
<dbReference type="PaxDb" id="4896-SPAC31A2.04c.1"/>
<dbReference type="EnsemblFungi" id="SPAC31A2.04c.1">
    <property type="protein sequence ID" value="SPAC31A2.04c.1:pep"/>
    <property type="gene ID" value="SPAC31A2.04c"/>
</dbReference>
<dbReference type="KEGG" id="spo:2543122"/>
<dbReference type="PomBase" id="SPAC31A2.04c"/>
<dbReference type="VEuPathDB" id="FungiDB:SPAC31A2.04c"/>
<dbReference type="eggNOG" id="KOG0177">
    <property type="taxonomic scope" value="Eukaryota"/>
</dbReference>
<dbReference type="HOGENOM" id="CLU_035750_12_0_1"/>
<dbReference type="InParanoid" id="Q09720"/>
<dbReference type="OMA" id="MKRDHDK"/>
<dbReference type="PhylomeDB" id="Q09720"/>
<dbReference type="Reactome" id="R-SPO-1236978">
    <property type="pathway name" value="Cross-presentation of soluble exogenous antigens (endosomes)"/>
</dbReference>
<dbReference type="Reactome" id="R-SPO-350562">
    <property type="pathway name" value="Regulation of ornithine decarboxylase (ODC)"/>
</dbReference>
<dbReference type="Reactome" id="R-SPO-5687128">
    <property type="pathway name" value="MAPK6/MAPK4 signaling"/>
</dbReference>
<dbReference type="Reactome" id="R-SPO-5689603">
    <property type="pathway name" value="UCH proteinases"/>
</dbReference>
<dbReference type="Reactome" id="R-SPO-5689880">
    <property type="pathway name" value="Ub-specific processing proteases"/>
</dbReference>
<dbReference type="Reactome" id="R-SPO-68949">
    <property type="pathway name" value="Orc1 removal from chromatin"/>
</dbReference>
<dbReference type="Reactome" id="R-SPO-69017">
    <property type="pathway name" value="CDK-mediated phosphorylation and removal of Cdc6"/>
</dbReference>
<dbReference type="Reactome" id="R-SPO-69601">
    <property type="pathway name" value="Ubiquitin Mediated Degradation of Phosphorylated Cdc25A"/>
</dbReference>
<dbReference type="Reactome" id="R-SPO-75815">
    <property type="pathway name" value="Ubiquitin-dependent degradation of Cyclin D"/>
</dbReference>
<dbReference type="Reactome" id="R-SPO-8854050">
    <property type="pathway name" value="FBXL7 down-regulates AURKA during mitotic entry and in early mitosis"/>
</dbReference>
<dbReference type="Reactome" id="R-SPO-8948751">
    <property type="pathway name" value="Regulation of PTEN stability and activity"/>
</dbReference>
<dbReference type="Reactome" id="R-SPO-8951664">
    <property type="pathway name" value="Neddylation"/>
</dbReference>
<dbReference type="Reactome" id="R-SPO-9755511">
    <property type="pathway name" value="KEAP1-NFE2L2 pathway"/>
</dbReference>
<dbReference type="Reactome" id="R-SPO-983168">
    <property type="pathway name" value="Antigen processing: Ubiquitination &amp; Proteasome degradation"/>
</dbReference>
<dbReference type="Reactome" id="R-SPO-9907900">
    <property type="pathway name" value="Proteasome assembly"/>
</dbReference>
<dbReference type="PRO" id="PR:Q09720"/>
<dbReference type="Proteomes" id="UP000002485">
    <property type="component" value="Chromosome I"/>
</dbReference>
<dbReference type="GO" id="GO:0005829">
    <property type="term" value="C:cytosol"/>
    <property type="evidence" value="ECO:0007005"/>
    <property type="project" value="PomBase"/>
</dbReference>
<dbReference type="GO" id="GO:0005635">
    <property type="term" value="C:nuclear envelope"/>
    <property type="evidence" value="ECO:0007005"/>
    <property type="project" value="PomBase"/>
</dbReference>
<dbReference type="GO" id="GO:0005634">
    <property type="term" value="C:nucleus"/>
    <property type="evidence" value="ECO:0007005"/>
    <property type="project" value="PomBase"/>
</dbReference>
<dbReference type="GO" id="GO:0019774">
    <property type="term" value="C:proteasome core complex, beta-subunit complex"/>
    <property type="evidence" value="ECO:0000314"/>
    <property type="project" value="PomBase"/>
</dbReference>
<dbReference type="GO" id="GO:0043161">
    <property type="term" value="P:proteasome-mediated ubiquitin-dependent protein catabolic process"/>
    <property type="evidence" value="ECO:0000318"/>
    <property type="project" value="GO_Central"/>
</dbReference>
<dbReference type="CDD" id="cd03758">
    <property type="entry name" value="proteasome_beta_type_2"/>
    <property type="match status" value="1"/>
</dbReference>
<dbReference type="FunFam" id="3.60.20.10:FF:000008">
    <property type="entry name" value="Proteasome subunit beta type-4"/>
    <property type="match status" value="1"/>
</dbReference>
<dbReference type="Gene3D" id="3.60.20.10">
    <property type="entry name" value="Glutamine Phosphoribosylpyrophosphate, subunit 1, domain 1"/>
    <property type="match status" value="1"/>
</dbReference>
<dbReference type="InterPro" id="IPR029055">
    <property type="entry name" value="Ntn_hydrolases_N"/>
</dbReference>
<dbReference type="InterPro" id="IPR035206">
    <property type="entry name" value="Proteasome_beta2"/>
</dbReference>
<dbReference type="InterPro" id="IPR016050">
    <property type="entry name" value="Proteasome_bsu_CS"/>
</dbReference>
<dbReference type="InterPro" id="IPR001353">
    <property type="entry name" value="Proteasome_sua/b"/>
</dbReference>
<dbReference type="InterPro" id="IPR023333">
    <property type="entry name" value="Proteasome_suB-type"/>
</dbReference>
<dbReference type="PANTHER" id="PTHR32194">
    <property type="entry name" value="METALLOPROTEASE TLDD"/>
    <property type="match status" value="1"/>
</dbReference>
<dbReference type="PANTHER" id="PTHR32194:SF2">
    <property type="entry name" value="PROTEASOME SUBUNIT BETA TYPE-1"/>
    <property type="match status" value="1"/>
</dbReference>
<dbReference type="Pfam" id="PF00227">
    <property type="entry name" value="Proteasome"/>
    <property type="match status" value="1"/>
</dbReference>
<dbReference type="SUPFAM" id="SSF56235">
    <property type="entry name" value="N-terminal nucleophile aminohydrolases (Ntn hydrolases)"/>
    <property type="match status" value="1"/>
</dbReference>
<dbReference type="PROSITE" id="PS00854">
    <property type="entry name" value="PROTEASOME_BETA_1"/>
    <property type="match status" value="1"/>
</dbReference>
<dbReference type="PROSITE" id="PS51476">
    <property type="entry name" value="PROTEASOME_BETA_2"/>
    <property type="match status" value="1"/>
</dbReference>
<comment type="function">
    <text evidence="1">Non-catalytic component of the proteasome, a multicatalytic proteinase complex which is characterized by its ability to cleave peptides with Arg, Phe, Tyr, Leu, and Glu adjacent to the leaving group at neutral or slightly basic pH. The proteasome has an ATP-dependent proteolytic activity (By similarity).</text>
</comment>
<comment type="subunit">
    <text evidence="1">The 26S proteasome consists of a 20S proteasome core and two 19S regulatory subunits. The 20S proteasome core is composed of 28 subunits that are arranged in four stacked rings, resulting in a barrel-shaped structure. The two end rings are each formed by seven alpha subunits, and the two central rings are each formed by seven beta subunits. The catalytic chamber with the active sites is on the inside of the barrel (By similarity).</text>
</comment>
<comment type="subcellular location">
    <subcellularLocation>
        <location evidence="2 3">Cytoplasm</location>
    </subcellularLocation>
    <subcellularLocation>
        <location evidence="3">Nucleus</location>
    </subcellularLocation>
</comment>
<comment type="similarity">
    <text evidence="2">Belongs to the peptidase T1B family.</text>
</comment>
<sequence length="194" mass="21967">MESLLAVQGQDFVLTASSSSAVRGITVLKPDDDKSQILNSHNLMLYCGEAGDTTNFAEYIAANISLYTLRHNLNLSPEATASFTRKQLATSLRSRKPYQVNILLAGYETNLGKPELFWLDYLATCVRVPYACQGYSSFYCLSIFDRYYKPDLTIDEAVRIMKLCFDELKKRMPIDFKGFICKVVDKDGIREINI</sequence>
<protein>
    <recommendedName>
        <fullName>Probable proteasome subunit beta type-4</fullName>
    </recommendedName>
</protein>
<reference key="1">
    <citation type="journal article" date="2002" name="Nature">
        <title>The genome sequence of Schizosaccharomyces pombe.</title>
        <authorList>
            <person name="Wood V."/>
            <person name="Gwilliam R."/>
            <person name="Rajandream M.A."/>
            <person name="Lyne M.H."/>
            <person name="Lyne R."/>
            <person name="Stewart A."/>
            <person name="Sgouros J.G."/>
            <person name="Peat N."/>
            <person name="Hayles J."/>
            <person name="Baker S.G."/>
            <person name="Basham D."/>
            <person name="Bowman S."/>
            <person name="Brooks K."/>
            <person name="Brown D."/>
            <person name="Brown S."/>
            <person name="Chillingworth T."/>
            <person name="Churcher C.M."/>
            <person name="Collins M."/>
            <person name="Connor R."/>
            <person name="Cronin A."/>
            <person name="Davis P."/>
            <person name="Feltwell T."/>
            <person name="Fraser A."/>
            <person name="Gentles S."/>
            <person name="Goble A."/>
            <person name="Hamlin N."/>
            <person name="Harris D.E."/>
            <person name="Hidalgo J."/>
            <person name="Hodgson G."/>
            <person name="Holroyd S."/>
            <person name="Hornsby T."/>
            <person name="Howarth S."/>
            <person name="Huckle E.J."/>
            <person name="Hunt S."/>
            <person name="Jagels K."/>
            <person name="James K.D."/>
            <person name="Jones L."/>
            <person name="Jones M."/>
            <person name="Leather S."/>
            <person name="McDonald S."/>
            <person name="McLean J."/>
            <person name="Mooney P."/>
            <person name="Moule S."/>
            <person name="Mungall K.L."/>
            <person name="Murphy L.D."/>
            <person name="Niblett D."/>
            <person name="Odell C."/>
            <person name="Oliver K."/>
            <person name="O'Neil S."/>
            <person name="Pearson D."/>
            <person name="Quail M.A."/>
            <person name="Rabbinowitsch E."/>
            <person name="Rutherford K.M."/>
            <person name="Rutter S."/>
            <person name="Saunders D."/>
            <person name="Seeger K."/>
            <person name="Sharp S."/>
            <person name="Skelton J."/>
            <person name="Simmonds M.N."/>
            <person name="Squares R."/>
            <person name="Squares S."/>
            <person name="Stevens K."/>
            <person name="Taylor K."/>
            <person name="Taylor R.G."/>
            <person name="Tivey A."/>
            <person name="Walsh S.V."/>
            <person name="Warren T."/>
            <person name="Whitehead S."/>
            <person name="Woodward J.R."/>
            <person name="Volckaert G."/>
            <person name="Aert R."/>
            <person name="Robben J."/>
            <person name="Grymonprez B."/>
            <person name="Weltjens I."/>
            <person name="Vanstreels E."/>
            <person name="Rieger M."/>
            <person name="Schaefer M."/>
            <person name="Mueller-Auer S."/>
            <person name="Gabel C."/>
            <person name="Fuchs M."/>
            <person name="Duesterhoeft A."/>
            <person name="Fritzc C."/>
            <person name="Holzer E."/>
            <person name="Moestl D."/>
            <person name="Hilbert H."/>
            <person name="Borzym K."/>
            <person name="Langer I."/>
            <person name="Beck A."/>
            <person name="Lehrach H."/>
            <person name="Reinhardt R."/>
            <person name="Pohl T.M."/>
            <person name="Eger P."/>
            <person name="Zimmermann W."/>
            <person name="Wedler H."/>
            <person name="Wambutt R."/>
            <person name="Purnelle B."/>
            <person name="Goffeau A."/>
            <person name="Cadieu E."/>
            <person name="Dreano S."/>
            <person name="Gloux S."/>
            <person name="Lelaure V."/>
            <person name="Mottier S."/>
            <person name="Galibert F."/>
            <person name="Aves S.J."/>
            <person name="Xiang Z."/>
            <person name="Hunt C."/>
            <person name="Moore K."/>
            <person name="Hurst S.M."/>
            <person name="Lucas M."/>
            <person name="Rochet M."/>
            <person name="Gaillardin C."/>
            <person name="Tallada V.A."/>
            <person name="Garzon A."/>
            <person name="Thode G."/>
            <person name="Daga R.R."/>
            <person name="Cruzado L."/>
            <person name="Jimenez J."/>
            <person name="Sanchez M."/>
            <person name="del Rey F."/>
            <person name="Benito J."/>
            <person name="Dominguez A."/>
            <person name="Revuelta J.L."/>
            <person name="Moreno S."/>
            <person name="Armstrong J."/>
            <person name="Forsburg S.L."/>
            <person name="Cerutti L."/>
            <person name="Lowe T."/>
            <person name="McCombie W.R."/>
            <person name="Paulsen I."/>
            <person name="Potashkin J."/>
            <person name="Shpakovski G.V."/>
            <person name="Ussery D."/>
            <person name="Barrell B.G."/>
            <person name="Nurse P."/>
        </authorList>
    </citation>
    <scope>NUCLEOTIDE SEQUENCE [LARGE SCALE GENOMIC DNA]</scope>
    <source>
        <strain>972 / ATCC 24843</strain>
    </source>
</reference>
<reference key="2">
    <citation type="journal article" date="2006" name="Nat. Biotechnol.">
        <title>ORFeome cloning and global analysis of protein localization in the fission yeast Schizosaccharomyces pombe.</title>
        <authorList>
            <person name="Matsuyama A."/>
            <person name="Arai R."/>
            <person name="Yashiroda Y."/>
            <person name="Shirai A."/>
            <person name="Kamata A."/>
            <person name="Sekido S."/>
            <person name="Kobayashi Y."/>
            <person name="Hashimoto A."/>
            <person name="Hamamoto M."/>
            <person name="Hiraoka Y."/>
            <person name="Horinouchi S."/>
            <person name="Yoshida M."/>
        </authorList>
    </citation>
    <scope>SUBCELLULAR LOCATION [LARGE SCALE ANALYSIS]</scope>
</reference>
<evidence type="ECO:0000250" key="1"/>
<evidence type="ECO:0000255" key="2">
    <source>
        <dbReference type="PROSITE-ProRule" id="PRU00809"/>
    </source>
</evidence>
<evidence type="ECO:0000269" key="3">
    <source>
    </source>
</evidence>
<feature type="chain" id="PRO_0000148054" description="Probable proteasome subunit beta type-4">
    <location>
        <begin position="1"/>
        <end position="194"/>
    </location>
</feature>
<name>PSB4_SCHPO</name>
<gene>
    <name type="ORF">SPAC31A2.04c</name>
</gene>